<keyword id="KW-0007">Acetylation</keyword>
<keyword id="KW-0072">Autophagy</keyword>
<keyword id="KW-1003">Cell membrane</keyword>
<keyword id="KW-0963">Cytoplasm</keyword>
<keyword id="KW-0968">Cytoplasmic vesicle</keyword>
<keyword id="KW-0256">Endoplasmic reticulum</keyword>
<keyword id="KW-0472">Membrane</keyword>
<keyword id="KW-0539">Nucleus</keyword>
<keyword id="KW-0597">Phosphoprotein</keyword>
<keyword id="KW-0647">Proteasome</keyword>
<keyword id="KW-1185">Reference proteome</keyword>
<keyword id="KW-0832">Ubl conjugation</keyword>
<dbReference type="EMBL" id="CR860611">
    <property type="protein sequence ID" value="CAH92732.1"/>
    <property type="molecule type" value="mRNA"/>
</dbReference>
<dbReference type="RefSeq" id="NP_001127579.1">
    <property type="nucleotide sequence ID" value="NM_001134107.1"/>
</dbReference>
<dbReference type="BMRB" id="Q5R684"/>
<dbReference type="SMR" id="Q5R684"/>
<dbReference type="FunCoup" id="Q5R684">
    <property type="interactions" value="3515"/>
</dbReference>
<dbReference type="STRING" id="9601.ENSPPYP00000021651"/>
<dbReference type="GeneID" id="100174657"/>
<dbReference type="KEGG" id="pon:100174657"/>
<dbReference type="CTD" id="29979"/>
<dbReference type="eggNOG" id="KOG0010">
    <property type="taxonomic scope" value="Eukaryota"/>
</dbReference>
<dbReference type="InParanoid" id="Q5R684"/>
<dbReference type="OrthoDB" id="9450922at2759"/>
<dbReference type="Proteomes" id="UP000001595">
    <property type="component" value="Unplaced"/>
</dbReference>
<dbReference type="GO" id="GO:0016235">
    <property type="term" value="C:aggresome"/>
    <property type="evidence" value="ECO:0000250"/>
    <property type="project" value="UniProtKB"/>
</dbReference>
<dbReference type="GO" id="GO:0005776">
    <property type="term" value="C:autophagosome"/>
    <property type="evidence" value="ECO:0000250"/>
    <property type="project" value="UniProtKB"/>
</dbReference>
<dbReference type="GO" id="GO:0031410">
    <property type="term" value="C:cytoplasmic vesicle"/>
    <property type="evidence" value="ECO:0007669"/>
    <property type="project" value="UniProtKB-KW"/>
</dbReference>
<dbReference type="GO" id="GO:0005829">
    <property type="term" value="C:cytosol"/>
    <property type="evidence" value="ECO:0007669"/>
    <property type="project" value="TreeGrafter"/>
</dbReference>
<dbReference type="GO" id="GO:0005783">
    <property type="term" value="C:endoplasmic reticulum"/>
    <property type="evidence" value="ECO:0000250"/>
    <property type="project" value="UniProtKB"/>
</dbReference>
<dbReference type="GO" id="GO:0005634">
    <property type="term" value="C:nucleus"/>
    <property type="evidence" value="ECO:0007669"/>
    <property type="project" value="UniProtKB-SubCell"/>
</dbReference>
<dbReference type="GO" id="GO:0005886">
    <property type="term" value="C:plasma membrane"/>
    <property type="evidence" value="ECO:0000250"/>
    <property type="project" value="UniProtKB"/>
</dbReference>
<dbReference type="GO" id="GO:0000502">
    <property type="term" value="C:proteasome complex"/>
    <property type="evidence" value="ECO:0007669"/>
    <property type="project" value="UniProtKB-KW"/>
</dbReference>
<dbReference type="GO" id="GO:0031593">
    <property type="term" value="F:polyubiquitin modification-dependent protein binding"/>
    <property type="evidence" value="ECO:0000250"/>
    <property type="project" value="UniProtKB"/>
</dbReference>
<dbReference type="GO" id="GO:0035973">
    <property type="term" value="P:aggrephagy"/>
    <property type="evidence" value="ECO:0000250"/>
    <property type="project" value="UniProtKB"/>
</dbReference>
<dbReference type="GO" id="GO:0000045">
    <property type="term" value="P:autophagosome assembly"/>
    <property type="evidence" value="ECO:0007669"/>
    <property type="project" value="TreeGrafter"/>
</dbReference>
<dbReference type="GO" id="GO:0036503">
    <property type="term" value="P:ERAD pathway"/>
    <property type="evidence" value="ECO:0000250"/>
    <property type="project" value="UniProtKB"/>
</dbReference>
<dbReference type="GO" id="GO:1901340">
    <property type="term" value="P:negative regulation of store-operated calcium channel activity"/>
    <property type="evidence" value="ECO:0000250"/>
    <property type="project" value="UniProtKB"/>
</dbReference>
<dbReference type="GO" id="GO:1904294">
    <property type="term" value="P:positive regulation of ERAD pathway"/>
    <property type="evidence" value="ECO:0000250"/>
    <property type="project" value="UniProtKB"/>
</dbReference>
<dbReference type="GO" id="GO:0031398">
    <property type="term" value="P:positive regulation of protein ubiquitination"/>
    <property type="evidence" value="ECO:0000250"/>
    <property type="project" value="UniProtKB"/>
</dbReference>
<dbReference type="GO" id="GO:0016241">
    <property type="term" value="P:regulation of macroautophagy"/>
    <property type="evidence" value="ECO:0007669"/>
    <property type="project" value="TreeGrafter"/>
</dbReference>
<dbReference type="GO" id="GO:0006511">
    <property type="term" value="P:ubiquitin-dependent protein catabolic process"/>
    <property type="evidence" value="ECO:0007669"/>
    <property type="project" value="TreeGrafter"/>
</dbReference>
<dbReference type="CDD" id="cd14399">
    <property type="entry name" value="UBA_PLICs"/>
    <property type="match status" value="1"/>
</dbReference>
<dbReference type="CDD" id="cd01808">
    <property type="entry name" value="Ubl_PLICs"/>
    <property type="match status" value="1"/>
</dbReference>
<dbReference type="FunFam" id="1.10.260.100:FF:000001">
    <property type="entry name" value="Ubiquilin 1"/>
    <property type="match status" value="1"/>
</dbReference>
<dbReference type="FunFam" id="1.10.260.100:FF:000003">
    <property type="entry name" value="Ubiquilin 1"/>
    <property type="match status" value="1"/>
</dbReference>
<dbReference type="FunFam" id="1.10.8.10:FF:000007">
    <property type="entry name" value="Ubiquilin 1"/>
    <property type="match status" value="1"/>
</dbReference>
<dbReference type="FunFam" id="3.10.20.90:FF:000081">
    <property type="entry name" value="ubiquilin-1 isoform X2"/>
    <property type="match status" value="1"/>
</dbReference>
<dbReference type="Gene3D" id="1.10.260.100">
    <property type="match status" value="2"/>
</dbReference>
<dbReference type="Gene3D" id="1.10.8.10">
    <property type="entry name" value="DNA helicase RuvA subunit, C-terminal domain"/>
    <property type="match status" value="1"/>
</dbReference>
<dbReference type="Gene3D" id="3.10.20.90">
    <property type="entry name" value="Phosphatidylinositol 3-kinase Catalytic Subunit, Chain A, domain 1"/>
    <property type="match status" value="1"/>
</dbReference>
<dbReference type="InterPro" id="IPR006636">
    <property type="entry name" value="STI1_HS-bd"/>
</dbReference>
<dbReference type="InterPro" id="IPR015940">
    <property type="entry name" value="UBA"/>
</dbReference>
<dbReference type="InterPro" id="IPR009060">
    <property type="entry name" value="UBA-like_sf"/>
</dbReference>
<dbReference type="InterPro" id="IPR015496">
    <property type="entry name" value="Ubiquilin"/>
</dbReference>
<dbReference type="InterPro" id="IPR000626">
    <property type="entry name" value="Ubiquitin-like_dom"/>
</dbReference>
<dbReference type="InterPro" id="IPR029071">
    <property type="entry name" value="Ubiquitin-like_domsf"/>
</dbReference>
<dbReference type="PANTHER" id="PTHR10677">
    <property type="entry name" value="UBIQUILIN"/>
    <property type="match status" value="1"/>
</dbReference>
<dbReference type="PANTHER" id="PTHR10677:SF16">
    <property type="entry name" value="UBIQUILIN-1"/>
    <property type="match status" value="1"/>
</dbReference>
<dbReference type="Pfam" id="PF00240">
    <property type="entry name" value="ubiquitin"/>
    <property type="match status" value="1"/>
</dbReference>
<dbReference type="Pfam" id="PF23195">
    <property type="entry name" value="UBQLN1"/>
    <property type="match status" value="1"/>
</dbReference>
<dbReference type="SMART" id="SM00727">
    <property type="entry name" value="STI1"/>
    <property type="match status" value="4"/>
</dbReference>
<dbReference type="SMART" id="SM00165">
    <property type="entry name" value="UBA"/>
    <property type="match status" value="1"/>
</dbReference>
<dbReference type="SMART" id="SM00213">
    <property type="entry name" value="UBQ"/>
    <property type="match status" value="1"/>
</dbReference>
<dbReference type="SUPFAM" id="SSF46934">
    <property type="entry name" value="UBA-like"/>
    <property type="match status" value="1"/>
</dbReference>
<dbReference type="SUPFAM" id="SSF54236">
    <property type="entry name" value="Ubiquitin-like"/>
    <property type="match status" value="1"/>
</dbReference>
<dbReference type="PROSITE" id="PS50030">
    <property type="entry name" value="UBA"/>
    <property type="match status" value="1"/>
</dbReference>
<dbReference type="PROSITE" id="PS50053">
    <property type="entry name" value="UBIQUITIN_2"/>
    <property type="match status" value="1"/>
</dbReference>
<feature type="initiator methionine" description="Removed" evidence="3">
    <location>
        <position position="1"/>
    </location>
</feature>
<feature type="chain" id="PRO_0000290337" description="Ubiquilin-1">
    <location>
        <begin position="2"/>
        <end position="589"/>
    </location>
</feature>
<feature type="domain" description="Ubiquitin-like" evidence="6">
    <location>
        <begin position="37"/>
        <end position="111"/>
    </location>
</feature>
<feature type="domain" description="STI1 1" evidence="4">
    <location>
        <begin position="182"/>
        <end position="210"/>
    </location>
</feature>
<feature type="domain" description="STI1 2" evidence="4">
    <location>
        <begin position="212"/>
        <end position="251"/>
    </location>
</feature>
<feature type="domain" description="STI1 3" evidence="4">
    <location>
        <begin position="387"/>
        <end position="434"/>
    </location>
</feature>
<feature type="domain" description="STI1 4" evidence="4">
    <location>
        <begin position="438"/>
        <end position="470"/>
    </location>
</feature>
<feature type="domain" description="UBA" evidence="5">
    <location>
        <begin position="546"/>
        <end position="586"/>
    </location>
</feature>
<feature type="region of interest" description="Disordered" evidence="7">
    <location>
        <begin position="1"/>
        <end position="35"/>
    </location>
</feature>
<feature type="region of interest" description="Disordered" evidence="7">
    <location>
        <begin position="110"/>
        <end position="145"/>
    </location>
</feature>
<feature type="region of interest" description="Interaction with UBXN4" evidence="3">
    <location>
        <begin position="178"/>
        <end position="428"/>
    </location>
</feature>
<feature type="region of interest" description="Disordered" evidence="7">
    <location>
        <begin position="295"/>
        <end position="371"/>
    </location>
</feature>
<feature type="region of interest" description="Disordered" evidence="7">
    <location>
        <begin position="488"/>
        <end position="520"/>
    </location>
</feature>
<feature type="compositionally biased region" description="Gly residues" evidence="7">
    <location>
        <begin position="1"/>
        <end position="11"/>
    </location>
</feature>
<feature type="compositionally biased region" description="Low complexity" evidence="7">
    <location>
        <begin position="12"/>
        <end position="35"/>
    </location>
</feature>
<feature type="compositionally biased region" description="Polar residues" evidence="7">
    <location>
        <begin position="110"/>
        <end position="124"/>
    </location>
</feature>
<feature type="compositionally biased region" description="Low complexity" evidence="7">
    <location>
        <begin position="125"/>
        <end position="145"/>
    </location>
</feature>
<feature type="compositionally biased region" description="Polar residues" evidence="7">
    <location>
        <begin position="299"/>
        <end position="313"/>
    </location>
</feature>
<feature type="compositionally biased region" description="Low complexity" evidence="7">
    <location>
        <begin position="327"/>
        <end position="360"/>
    </location>
</feature>
<feature type="compositionally biased region" description="Gly residues" evidence="7">
    <location>
        <begin position="489"/>
        <end position="499"/>
    </location>
</feature>
<feature type="compositionally biased region" description="Polar residues" evidence="7">
    <location>
        <begin position="509"/>
        <end position="520"/>
    </location>
</feature>
<feature type="modified residue" description="N-acetylalanine" evidence="3">
    <location>
        <position position="2"/>
    </location>
</feature>
<sequence>MAESGESGGPPGSQDSAAGAEGAGAPAAAASAEPKIMKVTVKTPKEKEEFAVPENSSVQQFKEEISKRFKSHTDQLVLIFAGKILKDQDTLSQHGIHDGLTVHLVIKTQNRPQDHSAQQTNTAGSNVTTSSTPNSNSTSGSATSNPFGLGGLGGLAGLSSLGLNTTNFSELQSQMQRQLLSNPEMMVQIMENPFVQSMLSNPDLMRQLIMANPQMQQLIQRNPEISHMLNNPDIMRQTLELARNPAMMQEMMRNQDRALSNLESIPGGYNALRRMYTDIQEPMLSAAQEQFGGNPFASLVSNTSSGEGSQPSRTENRDPLPNPWAPQTSQSSSASSGTASTVGGTTGSTASGTSGQSTTAPNLVPGVGASMFNTPGMQSLLQQITENPQLMQNMLSAPYMRSMMQSLSQNPDLAAQMMLNNPLFAGNPQLQEQMRQQLPTFLQQMQNPDTLSAMSNPRAMQALLQIQQGLQTLATEAPGLIPGFTPGLGALGSTGGSSGTNGSNATPSENTSPTAGTTEPGHQQFIQQMLQALAGVNPQLQNPEVRFQQQLEQPSAMGFLNREANLQALIATGGDINAAIERLLGSQPS</sequence>
<organism>
    <name type="scientific">Pongo abelii</name>
    <name type="common">Sumatran orangutan</name>
    <name type="synonym">Pongo pygmaeus abelii</name>
    <dbReference type="NCBI Taxonomy" id="9601"/>
    <lineage>
        <taxon>Eukaryota</taxon>
        <taxon>Metazoa</taxon>
        <taxon>Chordata</taxon>
        <taxon>Craniata</taxon>
        <taxon>Vertebrata</taxon>
        <taxon>Euteleostomi</taxon>
        <taxon>Mammalia</taxon>
        <taxon>Eutheria</taxon>
        <taxon>Euarchontoglires</taxon>
        <taxon>Primates</taxon>
        <taxon>Haplorrhini</taxon>
        <taxon>Catarrhini</taxon>
        <taxon>Hominidae</taxon>
        <taxon>Pongo</taxon>
    </lineage>
</organism>
<protein>
    <recommendedName>
        <fullName>Ubiquilin-1</fullName>
    </recommendedName>
</protein>
<reference key="1">
    <citation type="submission" date="2004-11" db="EMBL/GenBank/DDBJ databases">
        <authorList>
            <consortium name="The German cDNA consortium"/>
        </authorList>
    </citation>
    <scope>NUCLEOTIDE SEQUENCE [LARGE SCALE MRNA]</scope>
    <source>
        <tissue>Brain cortex</tissue>
    </source>
</reference>
<comment type="function">
    <text evidence="2 3">Plays an important role in the regulation of different protein degradation mechanisms and pathways including ubiquitin-proteasome system (UPS), autophagy and endoplasmic reticulum-associated protein degradation (ERAD) pathway. Mediates the proteasomal targeting of misfolded or accumulated proteins for degradation by binding (via UBA domain) to their polyubiquitin chains and by interacting (via ubiquitin-like domain) with the subunits of the proteasome. Plays a role in the ERAD pathway via its interaction with ER-localized proteins UBXN4, VCP and HERPUD1 and may form a link between the polyubiquitinated ERAD substrates and the proteasome. Plays a role in unfolded protein response (UPR) by attenuating the induction of UPR-inducible genes, DDTI3/CHOP, HSPA5 and PDIA2 during ER stress. Involved in the regulation of macroautophagy and autophagosome formation; required for maturation of autophagy-related protein LC3 from the cytosolic form LC3-I to the membrane-bound form LC3-II and may assist in the maturation of autophagosomes to autolysosomes by mediating autophagosome-lysosome fusion. Negatively regulates the TICAM1/TRIF-dependent toll-like receptor signaling pathway by decreasing the abundance of TICAM1 via the autophagic pathway. Promotes the ubiquitination and lysosomal degradation of ORAI1, consequently down-regulating the ORAI1-mediated Ca2+ mobilization. Suppresses the maturation and proteasomal degradation of amyloid beta A4 protein (A4) by stimulating the lysine 63 (K63)-linked polyubiquitination. Delays the maturation of A4 by sequestering it in the Golgi apparatus and preventing its transport to the cell surface for subsequent processing. Ubiquitinates BCL2L10 and thereby stabilizes protein abundance (By similarity).</text>
</comment>
<comment type="subunit">
    <text evidence="1 2 3">Monomer and homodimer. Heterodimer with UBQLN2. Binds CD47, NBL1, GABRA1, GABRA2, GABRA3, GABRA6, GABRB1, GABRB2 and GABRB3. Binds UBE3A, BTRC, P4HB and MTOR. Interacts with the proteasome 19S subunit. Interacts (via ubiquitin-like domain) with TREX1; the interaction is direct and may control TREX1 subcellular location. Forms a complex with UBXN4 and VCP. Interacts (via UBA domain) with UBQLN4 (via ubiquitin-like domain). Found in a complex with UBQLN2 and MAP1LC3A/B/C. The monomeric form interacts with PSEN1 and PSEN2. Interacts with ORAI1. Interacts (via UBA domain) with TICAM1. Interacts with EPS15. Interacts (via UBA domain) with UBA52 and (via ubiquitin-like domain) with PSMD3 and PSMD4. Interacts with HERPUD1. Interacts with MAP1LC3A/B/C in the presence of UBQLN4. Interacts (via ubiquitin-like domain) with EPS15 (via UIM domains) and both the ubiquitinated and non-ubiquitinated forms can interact with EPS15. Interacts (via ubiquitin-like domain) with EPS15L1, HGS (via UIM domain) and STAM2 (via UIM domain) (By similarity). Interacts with BCL2L10/BCL-B; in the cytoplasm (By similarity).</text>
</comment>
<comment type="subcellular location">
    <subcellularLocation>
        <location evidence="3">Nucleus</location>
    </subcellularLocation>
    <subcellularLocation>
        <location evidence="3">Cytoplasm</location>
    </subcellularLocation>
    <subcellularLocation>
        <location evidence="3">Endoplasmic reticulum</location>
    </subcellularLocation>
    <subcellularLocation>
        <location evidence="3">Cytoplasmic vesicle</location>
        <location evidence="3">Autophagosome</location>
    </subcellularLocation>
    <subcellularLocation>
        <location evidence="3">Cell membrane</location>
    </subcellularLocation>
    <text evidence="2 3">Detected in neuronal processes and at synapses. Recruited to the ER during ER-associated protein degradation (ERAD). Colocalizes with PSEN1 in the cell membrane and in cytoplasmic juxtanuclear structures called aggresomes. Colocalizes with ORAI1 and TICAM1 in the autophagosome. Colocalizes with EPS15 and HGS in ubiquitin-rich cytoplasmic aggregates that are not endocytic compartments and with EPS15 also in aggresomes.</text>
</comment>
<comment type="domain">
    <text evidence="3">The UBA domain mediates binding to PSEN1 and PSEN2. It also binds ubiquitin with micromolar affinity, independently of polyubiquitin linkage type. Essential for its association with microtubule-associated protein 1 light chain 3 (MAP1LC3).</text>
</comment>
<comment type="domain">
    <text evidence="3">The ubiquitin-like domain mediates its association with the subunits of the proteasome.</text>
</comment>
<comment type="domain">
    <text evidence="3">Dimerization is dependent upon the central region of the protein containing the STI1 domains and is independent of its ubiquitin-like and UBA domains.</text>
</comment>
<comment type="PTM">
    <text evidence="3">Degraded during both macroautophagy and during chaperone-mediated autophagy (CMA).</text>
</comment>
<comment type="PTM">
    <text evidence="3">Phosphorylated.</text>
</comment>
<comment type="PTM">
    <text evidence="3">Ubiquitinated.</text>
</comment>
<name>UBQL1_PONAB</name>
<proteinExistence type="evidence at transcript level"/>
<evidence type="ECO:0000250" key="1">
    <source>
        <dbReference type="UniProtKB" id="Q8R317"/>
    </source>
</evidence>
<evidence type="ECO:0000250" key="2">
    <source>
        <dbReference type="UniProtKB" id="Q9JJP9"/>
    </source>
</evidence>
<evidence type="ECO:0000250" key="3">
    <source>
        <dbReference type="UniProtKB" id="Q9UMX0"/>
    </source>
</evidence>
<evidence type="ECO:0000255" key="4"/>
<evidence type="ECO:0000255" key="5">
    <source>
        <dbReference type="PROSITE-ProRule" id="PRU00212"/>
    </source>
</evidence>
<evidence type="ECO:0000255" key="6">
    <source>
        <dbReference type="PROSITE-ProRule" id="PRU00214"/>
    </source>
</evidence>
<evidence type="ECO:0000256" key="7">
    <source>
        <dbReference type="SAM" id="MobiDB-lite"/>
    </source>
</evidence>
<gene>
    <name type="primary">UBQLN1</name>
</gene>
<accession>Q5R684</accession>